<evidence type="ECO:0000250" key="1">
    <source>
        <dbReference type="UniProtKB" id="O04385"/>
    </source>
</evidence>
<evidence type="ECO:0000255" key="2">
    <source>
        <dbReference type="PROSITE-ProRule" id="PRU01020"/>
    </source>
</evidence>
<evidence type="ECO:0000269" key="3">
    <source>
    </source>
</evidence>
<evidence type="ECO:0000303" key="4">
    <source>
    </source>
</evidence>
<evidence type="ECO:0000305" key="5"/>
<reference key="1">
    <citation type="journal article" date="2019" name="J. Am. Chem. Soc.">
        <title>Genome-mined Diels-Alderase catalyzes formation of the cis-octahydrodecalins of varicidin A and B.</title>
        <authorList>
            <person name="Tan D."/>
            <person name="Jamieson C.S."/>
            <person name="Ohashi M."/>
            <person name="Tang M.C."/>
            <person name="Houk K.N."/>
            <person name="Tang Y."/>
        </authorList>
    </citation>
    <scope>NUCLEOTIDE SEQUENCE [GENOMIC DNA]</scope>
    <scope>FUNCTION</scope>
    <scope>CATALYTIC ACTIVITY</scope>
    <scope>PATHWAY</scope>
    <source>
        <strain>HXQ-H-1</strain>
    </source>
</reference>
<accession>A0A3Q9U4A9</accession>
<protein>
    <recommendedName>
        <fullName evidence="4">Methyltransferase pvhD</fullName>
        <ecNumber evidence="3">2.1.1.-</ecNumber>
    </recommendedName>
    <alternativeName>
        <fullName evidence="4">Varicidin biosynthesis cluster protein D</fullName>
    </alternativeName>
</protein>
<organism>
    <name type="scientific">Talaromyces variabilis</name>
    <name type="common">Penicillium variabile</name>
    <dbReference type="NCBI Taxonomy" id="28576"/>
    <lineage>
        <taxon>Eukaryota</taxon>
        <taxon>Fungi</taxon>
        <taxon>Dikarya</taxon>
        <taxon>Ascomycota</taxon>
        <taxon>Pezizomycotina</taxon>
        <taxon>Eurotiomycetes</taxon>
        <taxon>Eurotiomycetidae</taxon>
        <taxon>Eurotiales</taxon>
        <taxon>Trichocomaceae</taxon>
        <taxon>Talaromyces</taxon>
    </lineage>
</organism>
<comment type="function">
    <text evidence="3">Methyltransferase; part of the gene cluster that mediates the biosynthesis of varicidin A, an antifungal natural product containing a cis-octahydrodecalin core (PubMed:30609896). The PKS module of pvhA together with the enoylreductase pvhC catalyze the formation of the polyketide unit which is then conjugated to L-isoleucine by the condensation domain of the NRPS module (PubMed:30609896). Activity of the Dieckmann cyclase domain (RED) of pvhA results in release of an acyclic tetramate (PubMed:30609896). The cytochrome P450 monooxygenase pvhE then catalyzes the oxidation of the C21 methyl group to a to carboxylate group (PubMed:30609896). The methyltransferase pvhD then further methylates the pvhE product (PubMed:30609896). The Diels-Alderase pvhB is able to catalyze Diels-Alder cycloaddition using both pvhE and pvhD products as substrates to form the decalin ring, yielding varicidin B and A, respectively (PubMed:30609896).</text>
</comment>
<comment type="pathway">
    <text evidence="3">Secondary metabolite biosynthesis.</text>
</comment>
<comment type="similarity">
    <text evidence="5">Belongs to the class I-like SAM-binding methyltransferase superfamily. Cation-independent O-methyltransferase family.</text>
</comment>
<sequence length="360" mass="40389">MPPSLPCRCQEAPTPVFGYLYQIVELGVMRLFVEKRVFNEIPDEGILIADLATKTGIEFNLLERLVNFLISSRIFTSSSPGYVHHTPTSKYFTERRAQLWYPHIFDTFLTSAVKWPEYFDINGMQEPQCSSKSPFGFGSGYSDKSVYEIFDLMPKRSSDFNATMALSMGEMPILGMYDFSWIGEYGKRPEVKDRTLFVDVSGGKGQALQAILEAFPSIIPEQCVLEDQEKVIEEAKLATGPLETVKKVPIDLFGEQPVKGALVYYIRRVLNDWSDAEVVQILRSIRDACAPDSKVLISENLLPDEPPLKLAAIDVWMLNFGGKRRNKGNFGALARRAGFELSSIAEDDKTKSAVLELVVA</sequence>
<gene>
    <name evidence="4" type="primary">pvhD</name>
</gene>
<keyword id="KW-0489">Methyltransferase</keyword>
<keyword id="KW-0949">S-adenosyl-L-methionine</keyword>
<keyword id="KW-0808">Transferase</keyword>
<dbReference type="EC" id="2.1.1.-" evidence="3"/>
<dbReference type="EMBL" id="MK376933">
    <property type="protein sequence ID" value="AZZ09611.1"/>
    <property type="molecule type" value="Genomic_DNA"/>
</dbReference>
<dbReference type="SMR" id="A0A3Q9U4A9"/>
<dbReference type="GO" id="GO:0008171">
    <property type="term" value="F:O-methyltransferase activity"/>
    <property type="evidence" value="ECO:0007669"/>
    <property type="project" value="InterPro"/>
</dbReference>
<dbReference type="GO" id="GO:0032259">
    <property type="term" value="P:methylation"/>
    <property type="evidence" value="ECO:0007669"/>
    <property type="project" value="UniProtKB-KW"/>
</dbReference>
<dbReference type="GO" id="GO:0044550">
    <property type="term" value="P:secondary metabolite biosynthetic process"/>
    <property type="evidence" value="ECO:0007669"/>
    <property type="project" value="UniProtKB-ARBA"/>
</dbReference>
<dbReference type="Gene3D" id="3.40.50.150">
    <property type="entry name" value="Vaccinia Virus protein VP39"/>
    <property type="match status" value="1"/>
</dbReference>
<dbReference type="Gene3D" id="1.10.10.10">
    <property type="entry name" value="Winged helix-like DNA-binding domain superfamily/Winged helix DNA-binding domain"/>
    <property type="match status" value="1"/>
</dbReference>
<dbReference type="InterPro" id="IPR016461">
    <property type="entry name" value="COMT-like"/>
</dbReference>
<dbReference type="InterPro" id="IPR001077">
    <property type="entry name" value="O_MeTrfase_dom"/>
</dbReference>
<dbReference type="InterPro" id="IPR029063">
    <property type="entry name" value="SAM-dependent_MTases_sf"/>
</dbReference>
<dbReference type="InterPro" id="IPR036388">
    <property type="entry name" value="WH-like_DNA-bd_sf"/>
</dbReference>
<dbReference type="InterPro" id="IPR036390">
    <property type="entry name" value="WH_DNA-bd_sf"/>
</dbReference>
<dbReference type="PANTHER" id="PTHR43712:SF16">
    <property type="entry name" value="O-METHYLTRANSFERASE ELCB"/>
    <property type="match status" value="1"/>
</dbReference>
<dbReference type="PANTHER" id="PTHR43712">
    <property type="entry name" value="PUTATIVE (AFU_ORTHOLOGUE AFUA_4G14580)-RELATED"/>
    <property type="match status" value="1"/>
</dbReference>
<dbReference type="Pfam" id="PF00891">
    <property type="entry name" value="Methyltransf_2"/>
    <property type="match status" value="1"/>
</dbReference>
<dbReference type="PIRSF" id="PIRSF005739">
    <property type="entry name" value="O-mtase"/>
    <property type="match status" value="1"/>
</dbReference>
<dbReference type="SUPFAM" id="SSF53335">
    <property type="entry name" value="S-adenosyl-L-methionine-dependent methyltransferases"/>
    <property type="match status" value="1"/>
</dbReference>
<dbReference type="SUPFAM" id="SSF46785">
    <property type="entry name" value="Winged helix' DNA-binding domain"/>
    <property type="match status" value="1"/>
</dbReference>
<dbReference type="PROSITE" id="PS51683">
    <property type="entry name" value="SAM_OMT_II"/>
    <property type="match status" value="1"/>
</dbReference>
<name>PVHD_TALVA</name>
<feature type="chain" id="PRO_0000453343" description="Methyltransferase pvhD">
    <location>
        <begin position="1"/>
        <end position="360"/>
    </location>
</feature>
<feature type="binding site" evidence="1">
    <location>
        <begin position="201"/>
        <end position="202"/>
    </location>
    <ligand>
        <name>S-adenosyl-L-methionine</name>
        <dbReference type="ChEBI" id="CHEBI:59789"/>
    </ligand>
</feature>
<feature type="binding site" evidence="2">
    <location>
        <position position="227"/>
    </location>
    <ligand>
        <name>S-adenosyl-L-methionine</name>
        <dbReference type="ChEBI" id="CHEBI:59789"/>
    </ligand>
</feature>
<feature type="binding site" evidence="1">
    <location>
        <begin position="251"/>
        <end position="252"/>
    </location>
    <ligand>
        <name>S-adenosyl-L-methionine</name>
        <dbReference type="ChEBI" id="CHEBI:59789"/>
    </ligand>
</feature>
<feature type="binding site" evidence="1">
    <location>
        <position position="267"/>
    </location>
    <ligand>
        <name>S-adenosyl-L-methionine</name>
        <dbReference type="ChEBI" id="CHEBI:59789"/>
    </ligand>
</feature>
<feature type="binding site" evidence="2">
    <location>
        <position position="268"/>
    </location>
    <ligand>
        <name>S-adenosyl-L-methionine</name>
        <dbReference type="ChEBI" id="CHEBI:59789"/>
    </ligand>
</feature>
<proteinExistence type="evidence at protein level"/>